<keyword id="KW-0496">Mitochondrion</keyword>
<keyword id="KW-0597">Phosphoprotein</keyword>
<keyword id="KW-1185">Reference proteome</keyword>
<dbReference type="EMBL" id="CR858326">
    <property type="protein sequence ID" value="CAH90562.1"/>
    <property type="molecule type" value="mRNA"/>
</dbReference>
<dbReference type="RefSeq" id="NP_001125298.1">
    <property type="nucleotide sequence ID" value="NM_001131826.1"/>
</dbReference>
<dbReference type="RefSeq" id="XP_054411228.1">
    <property type="nucleotide sequence ID" value="XM_054555253.2"/>
</dbReference>
<dbReference type="RefSeq" id="XP_054411255.1">
    <property type="nucleotide sequence ID" value="XM_054555280.2"/>
</dbReference>
<dbReference type="SMR" id="Q5RCE5"/>
<dbReference type="FunCoup" id="Q5RCE5">
    <property type="interactions" value="795"/>
</dbReference>
<dbReference type="STRING" id="9601.ENSPPYP00000001068"/>
<dbReference type="Ensembl" id="ENSPPYT00000048740.1">
    <property type="protein sequence ID" value="ENSPPYP00000043835.1"/>
    <property type="gene ID" value="ENSPPYG00000040309.1"/>
</dbReference>
<dbReference type="GeneID" id="100172197"/>
<dbReference type="KEGG" id="pon:100172197"/>
<dbReference type="CTD" id="51027"/>
<dbReference type="eggNOG" id="KOG2313">
    <property type="taxonomic scope" value="Eukaryota"/>
</dbReference>
<dbReference type="GeneTree" id="ENSGT00510000048165"/>
<dbReference type="HOGENOM" id="CLU_109462_3_0_1"/>
<dbReference type="InParanoid" id="Q5RCE5"/>
<dbReference type="OMA" id="CLGGFGK"/>
<dbReference type="OrthoDB" id="4983at2759"/>
<dbReference type="TreeFam" id="TF354266"/>
<dbReference type="Proteomes" id="UP000001595">
    <property type="component" value="Chromosome 1"/>
</dbReference>
<dbReference type="GO" id="GO:1990229">
    <property type="term" value="C:iron-sulfur cluster assembly complex"/>
    <property type="evidence" value="ECO:0007669"/>
    <property type="project" value="Ensembl"/>
</dbReference>
<dbReference type="GO" id="GO:0005739">
    <property type="term" value="C:mitochondrion"/>
    <property type="evidence" value="ECO:0000250"/>
    <property type="project" value="UniProtKB"/>
</dbReference>
<dbReference type="FunFam" id="3.30.300.90:FF:000001">
    <property type="entry name" value="Transcriptional regulator BolA"/>
    <property type="match status" value="1"/>
</dbReference>
<dbReference type="Gene3D" id="3.30.300.90">
    <property type="entry name" value="BolA-like"/>
    <property type="match status" value="1"/>
</dbReference>
<dbReference type="InterPro" id="IPR002634">
    <property type="entry name" value="BolA"/>
</dbReference>
<dbReference type="InterPro" id="IPR036065">
    <property type="entry name" value="BolA-like_sf"/>
</dbReference>
<dbReference type="InterPro" id="IPR050961">
    <property type="entry name" value="BolA/IbaG_stress_morph_reg"/>
</dbReference>
<dbReference type="PANTHER" id="PTHR46229">
    <property type="entry name" value="BOLA TRANSCRIPTION REGULATOR"/>
    <property type="match status" value="1"/>
</dbReference>
<dbReference type="PANTHER" id="PTHR46229:SF2">
    <property type="entry name" value="BOLA-LIKE PROTEIN 1"/>
    <property type="match status" value="1"/>
</dbReference>
<dbReference type="Pfam" id="PF01722">
    <property type="entry name" value="BolA"/>
    <property type="match status" value="1"/>
</dbReference>
<dbReference type="SUPFAM" id="SSF82657">
    <property type="entry name" value="BolA-like"/>
    <property type="match status" value="1"/>
</dbReference>
<comment type="function">
    <text evidence="1 3">Acts as a mitochondrial iron-sulfur (Fe-S) cluster assembly factor that facilitates (Fe-S) cluster insertion into a subset of mitochondrial proteins (By similarity). Probably acts together with the monothiol glutaredoxin GLRX5. May protect cells against oxidative stress (By similarity).</text>
</comment>
<comment type="subunit">
    <text evidence="3">Interacts with GLRX5.</text>
</comment>
<comment type="subcellular location">
    <subcellularLocation>
        <location evidence="3">Mitochondrion</location>
    </subcellularLocation>
</comment>
<comment type="similarity">
    <text evidence="5">Belongs to the BolA/IbaG family.</text>
</comment>
<sequence length="137" mass="14187">MLSGRLVPGLVSMAGRVCLCQGSAGSGAVGPVEAAIRTKLEQALSPEVLELRNESGGHAVPPGSETHFRVAVVSSRFEGLSPLQRHRLIHAALAEELAGPVHALAIQARTPAQWGENSQLDTSPPCLGGNKKTLGTP</sequence>
<feature type="chain" id="PRO_0000201235" description="BolA-like protein 1">
    <location>
        <begin position="1"/>
        <end position="137"/>
    </location>
</feature>
<feature type="region of interest" description="Disordered" evidence="4">
    <location>
        <begin position="114"/>
        <end position="137"/>
    </location>
</feature>
<feature type="modified residue" description="Phosphoserine" evidence="2">
    <location>
        <position position="81"/>
    </location>
</feature>
<gene>
    <name type="primary">BOLA1</name>
</gene>
<reference key="1">
    <citation type="submission" date="2004-11" db="EMBL/GenBank/DDBJ databases">
        <authorList>
            <consortium name="The German cDNA consortium"/>
        </authorList>
    </citation>
    <scope>NUCLEOTIDE SEQUENCE [LARGE SCALE MRNA]</scope>
    <source>
        <tissue>Kidney</tissue>
    </source>
</reference>
<organism>
    <name type="scientific">Pongo abelii</name>
    <name type="common">Sumatran orangutan</name>
    <name type="synonym">Pongo pygmaeus abelii</name>
    <dbReference type="NCBI Taxonomy" id="9601"/>
    <lineage>
        <taxon>Eukaryota</taxon>
        <taxon>Metazoa</taxon>
        <taxon>Chordata</taxon>
        <taxon>Craniata</taxon>
        <taxon>Vertebrata</taxon>
        <taxon>Euteleostomi</taxon>
        <taxon>Mammalia</taxon>
        <taxon>Eutheria</taxon>
        <taxon>Euarchontoglires</taxon>
        <taxon>Primates</taxon>
        <taxon>Haplorrhini</taxon>
        <taxon>Catarrhini</taxon>
        <taxon>Hominidae</taxon>
        <taxon>Pongo</taxon>
    </lineage>
</organism>
<proteinExistence type="evidence at transcript level"/>
<name>BOLA1_PONAB</name>
<evidence type="ECO:0000250" key="1">
    <source>
        <dbReference type="UniProtKB" id="Q3E793"/>
    </source>
</evidence>
<evidence type="ECO:0000250" key="2">
    <source>
        <dbReference type="UniProtKB" id="Q9D8S9"/>
    </source>
</evidence>
<evidence type="ECO:0000250" key="3">
    <source>
        <dbReference type="UniProtKB" id="Q9Y3E2"/>
    </source>
</evidence>
<evidence type="ECO:0000256" key="4">
    <source>
        <dbReference type="SAM" id="MobiDB-lite"/>
    </source>
</evidence>
<evidence type="ECO:0000305" key="5"/>
<protein>
    <recommendedName>
        <fullName>BolA-like protein 1</fullName>
    </recommendedName>
</protein>
<accession>Q5RCE5</accession>